<name>FUJ4_GIBF5</name>
<evidence type="ECO:0000255" key="1"/>
<evidence type="ECO:0000255" key="2">
    <source>
        <dbReference type="PROSITE-ProRule" id="PRU00498"/>
    </source>
</evidence>
<evidence type="ECO:0000256" key="3">
    <source>
        <dbReference type="SAM" id="MobiDB-lite"/>
    </source>
</evidence>
<evidence type="ECO:0000269" key="4">
    <source>
    </source>
</evidence>
<evidence type="ECO:0000305" key="5"/>
<evidence type="ECO:0000305" key="6">
    <source>
    </source>
</evidence>
<evidence type="ECO:0000305" key="7">
    <source>
    </source>
</evidence>
<feature type="chain" id="PRO_0000442010" description="Fujikurins efflux protein FFUJ_12242">
    <location>
        <begin position="1"/>
        <end position="465"/>
    </location>
</feature>
<feature type="transmembrane region" description="Helical" evidence="1">
    <location>
        <begin position="70"/>
        <end position="90"/>
    </location>
</feature>
<feature type="transmembrane region" description="Helical" evidence="1">
    <location>
        <begin position="115"/>
        <end position="135"/>
    </location>
</feature>
<feature type="transmembrane region" description="Helical" evidence="1">
    <location>
        <begin position="142"/>
        <end position="162"/>
    </location>
</feature>
<feature type="transmembrane region" description="Helical" evidence="1">
    <location>
        <begin position="175"/>
        <end position="195"/>
    </location>
</feature>
<feature type="transmembrane region" description="Helical" evidence="1">
    <location>
        <begin position="200"/>
        <end position="220"/>
    </location>
</feature>
<feature type="transmembrane region" description="Helical" evidence="1">
    <location>
        <begin position="231"/>
        <end position="251"/>
    </location>
</feature>
<feature type="transmembrane region" description="Helical" evidence="1">
    <location>
        <begin position="274"/>
        <end position="294"/>
    </location>
</feature>
<feature type="transmembrane region" description="Helical" evidence="1">
    <location>
        <begin position="314"/>
        <end position="334"/>
    </location>
</feature>
<feature type="transmembrane region" description="Helical" evidence="1">
    <location>
        <begin position="342"/>
        <end position="362"/>
    </location>
</feature>
<feature type="transmembrane region" description="Helical" evidence="1">
    <location>
        <begin position="368"/>
        <end position="388"/>
    </location>
</feature>
<feature type="transmembrane region" description="Helical" evidence="1">
    <location>
        <begin position="404"/>
        <end position="424"/>
    </location>
</feature>
<feature type="transmembrane region" description="Helical" evidence="1">
    <location>
        <begin position="430"/>
        <end position="450"/>
    </location>
</feature>
<feature type="region of interest" description="Disordered" evidence="3">
    <location>
        <begin position="1"/>
        <end position="66"/>
    </location>
</feature>
<feature type="compositionally biased region" description="Basic and acidic residues" evidence="3">
    <location>
        <begin position="11"/>
        <end position="28"/>
    </location>
</feature>
<feature type="glycosylation site" description="N-linked (GlcNAc...) asparagine" evidence="2">
    <location>
        <position position="310"/>
    </location>
</feature>
<protein>
    <recommendedName>
        <fullName evidence="5">Fujikurins efflux protein FFUJ_12242</fullName>
    </recommendedName>
</protein>
<organism>
    <name type="scientific">Gibberella fujikuroi (strain CBS 195.34 / IMI 58289 / NRRL A-6831)</name>
    <name type="common">Bakanae and foot rot disease fungus</name>
    <name type="synonym">Fusarium fujikuroi</name>
    <dbReference type="NCBI Taxonomy" id="1279085"/>
    <lineage>
        <taxon>Eukaryota</taxon>
        <taxon>Fungi</taxon>
        <taxon>Dikarya</taxon>
        <taxon>Ascomycota</taxon>
        <taxon>Pezizomycotina</taxon>
        <taxon>Sordariomycetes</taxon>
        <taxon>Hypocreomycetidae</taxon>
        <taxon>Hypocreales</taxon>
        <taxon>Nectriaceae</taxon>
        <taxon>Fusarium</taxon>
        <taxon>Fusarium fujikuroi species complex</taxon>
    </lineage>
</organism>
<sequence length="465" mass="49779">MATNVGGAVDNSRRSISDNRHDPEKPAELPDTLSGSETERPQDANPEAALDQQASDAAKAHDEGPPDGGTAAWMVVLGAWCCSFCSPGWINSMGSFQEYYQREPLKDYSSSEIAWIPSLEIFFLFGLGPIVGIIFDRYGPRPLIIGGTIFHVFGLMMASLAKTYYQFLLSQGVCSAIGVACLYSPALACISTWFLKRRGAAMGIMATGSSVGGVIFPIMITRMIERNGYPWALRTAAFLILGLQVIACLTVRPRQKPVPKKLPAGRLAAPFTEPAFALLLAGIFILTYGMYIPIDYLPLSGLQEAHMSVNMSQYLVAIMNAASLFGRLGAGYGADIIGRWNMFIIACGVTGISNLAVWIPATKSSITIGYAIMFGFASGAFVSLVGALPVSVSPIPELGYRMGIVFLVISIPALTMAPIGGAILQHASNGWVSLKVFAGVMCLVGSAIILGSRMLYTEKRLIKAF</sequence>
<reference key="1">
    <citation type="journal article" date="2013" name="PLoS Pathog.">
        <title>Deciphering the cryptic genome: genome-wide analyses of the rice pathogen Fusarium fujikuroi reveal complex regulation of secondary metabolism and novel metabolites.</title>
        <authorList>
            <person name="Wiemann P."/>
            <person name="Sieber C.M.K."/>
            <person name="von Bargen K.W."/>
            <person name="Studt L."/>
            <person name="Niehaus E.-M."/>
            <person name="Espino J.J."/>
            <person name="Huss K."/>
            <person name="Michielse C.B."/>
            <person name="Albermann S."/>
            <person name="Wagner D."/>
            <person name="Bergner S.V."/>
            <person name="Connolly L.R."/>
            <person name="Fischer A."/>
            <person name="Reuter G."/>
            <person name="Kleigrewe K."/>
            <person name="Bald T."/>
            <person name="Wingfield B.D."/>
            <person name="Ophir R."/>
            <person name="Freeman S."/>
            <person name="Hippler M."/>
            <person name="Smith K.M."/>
            <person name="Brown D.W."/>
            <person name="Proctor R.H."/>
            <person name="Muensterkoetter M."/>
            <person name="Freitag M."/>
            <person name="Humpf H.-U."/>
            <person name="Gueldener U."/>
            <person name="Tudzynski B."/>
        </authorList>
    </citation>
    <scope>NUCLEOTIDE SEQUENCE [LARGE SCALE GENOMIC DNA]</scope>
    <scope>IDENTIFICATION</scope>
    <scope>FUNCTION</scope>
    <scope>INDUCTION</scope>
    <source>
        <strain>CBS 195.34 / IMI 58289 / NRRL A-6831</strain>
    </source>
</reference>
<reference key="2">
    <citation type="journal article" date="2015" name="J. Nat. Prod.">
        <title>Isolation and structure elucidation of fujikurins A-D: products of the PKS19 gene cluster in Fusarium fujikuroi.</title>
        <authorList>
            <person name="von Bargen K.W."/>
            <person name="Niehaus E.M."/>
            <person name="Krug I."/>
            <person name="Bergander K."/>
            <person name="Wuerthwein E.U."/>
            <person name="Tudzynski B."/>
            <person name="Humpf H.U."/>
        </authorList>
    </citation>
    <scope>FUNCTION</scope>
</reference>
<dbReference type="EMBL" id="HF679030">
    <property type="protein sequence ID" value="CCT72380.1"/>
    <property type="molecule type" value="Genomic_DNA"/>
</dbReference>
<dbReference type="RefSeq" id="XP_023434458.1">
    <property type="nucleotide sequence ID" value="XM_023581824.1"/>
</dbReference>
<dbReference type="SMR" id="S0ECK8"/>
<dbReference type="EnsemblFungi" id="CCT72380">
    <property type="protein sequence ID" value="CCT72380"/>
    <property type="gene ID" value="FFUJ_12242"/>
</dbReference>
<dbReference type="GeneID" id="35405698"/>
<dbReference type="VEuPathDB" id="FungiDB:FFUJ_12242"/>
<dbReference type="HOGENOM" id="CLU_001265_1_0_1"/>
<dbReference type="Proteomes" id="UP000016800">
    <property type="component" value="Chromosome 8"/>
</dbReference>
<dbReference type="GO" id="GO:0005886">
    <property type="term" value="C:plasma membrane"/>
    <property type="evidence" value="ECO:0007669"/>
    <property type="project" value="UniProtKB-SubCell"/>
</dbReference>
<dbReference type="GO" id="GO:0022857">
    <property type="term" value="F:transmembrane transporter activity"/>
    <property type="evidence" value="ECO:0007669"/>
    <property type="project" value="InterPro"/>
</dbReference>
<dbReference type="CDD" id="cd17352">
    <property type="entry name" value="MFS_MCT_SLC16"/>
    <property type="match status" value="1"/>
</dbReference>
<dbReference type="Gene3D" id="1.20.1250.20">
    <property type="entry name" value="MFS general substrate transporter like domains"/>
    <property type="match status" value="2"/>
</dbReference>
<dbReference type="InterPro" id="IPR011701">
    <property type="entry name" value="MFS"/>
</dbReference>
<dbReference type="InterPro" id="IPR020846">
    <property type="entry name" value="MFS_dom"/>
</dbReference>
<dbReference type="InterPro" id="IPR036259">
    <property type="entry name" value="MFS_trans_sf"/>
</dbReference>
<dbReference type="InterPro" id="IPR050327">
    <property type="entry name" value="Proton-linked_MCT"/>
</dbReference>
<dbReference type="PANTHER" id="PTHR11360:SF224">
    <property type="entry name" value="MAJOR FACILITATOR SUPERFAMILY (MFS) PROFILE DOMAIN-CONTAINING PROTEIN-RELATED"/>
    <property type="match status" value="1"/>
</dbReference>
<dbReference type="PANTHER" id="PTHR11360">
    <property type="entry name" value="MONOCARBOXYLATE TRANSPORTER"/>
    <property type="match status" value="1"/>
</dbReference>
<dbReference type="Pfam" id="PF07690">
    <property type="entry name" value="MFS_1"/>
    <property type="match status" value="1"/>
</dbReference>
<dbReference type="SUPFAM" id="SSF103473">
    <property type="entry name" value="MFS general substrate transporter"/>
    <property type="match status" value="1"/>
</dbReference>
<dbReference type="PROSITE" id="PS50850">
    <property type="entry name" value="MFS"/>
    <property type="match status" value="1"/>
</dbReference>
<keyword id="KW-1003">Cell membrane</keyword>
<keyword id="KW-0325">Glycoprotein</keyword>
<keyword id="KW-0472">Membrane</keyword>
<keyword id="KW-1185">Reference proteome</keyword>
<keyword id="KW-0812">Transmembrane</keyword>
<keyword id="KW-1133">Transmembrane helix</keyword>
<keyword id="KW-0813">Transport</keyword>
<gene>
    <name type="ORF">FFUJ_12242</name>
</gene>
<accession>S0ECK8</accession>
<proteinExistence type="evidence at transcript level"/>
<comment type="function">
    <text evidence="6 7">Efflux pump that may be involved in the secretion of fujikurins (PubMed:23825955, PubMed:26192387).</text>
</comment>
<comment type="subcellular location">
    <subcellularLocation>
        <location evidence="5">Cell membrane</location>
        <topology evidence="1">Multi-pass membrane protein</topology>
    </subcellularLocation>
</comment>
<comment type="induction">
    <text evidence="4">The fujikurins gene cluster is specifically expressed during rice infection (PubMed:23825955).</text>
</comment>
<comment type="similarity">
    <text evidence="5">Belongs to the major facilitator superfamily. Monocarboxylate porter (TC 2.A.1.13) family.</text>
</comment>